<proteinExistence type="evidence at protein level"/>
<keyword id="KW-0193">Cuticle</keyword>
<keyword id="KW-0903">Direct protein sequencing</keyword>
<protein>
    <recommendedName>
        <fullName>Cuticle protein 9.5</fullName>
    </recommendedName>
    <alternativeName>
        <fullName>LmNCP9.5</fullName>
    </alternativeName>
</protein>
<feature type="chain" id="PRO_0000252034" description="Cuticle protein 9.5">
    <location>
        <begin position="1"/>
        <end position="90"/>
    </location>
</feature>
<reference evidence="2" key="1">
    <citation type="journal article" date="2000" name="Insect Biochem. Mol. Biol.">
        <title>Studies on proteins in post-ecdysial nymphal cuticle of locust, Locusta migratoria, and cockroach, Blaberus craniifer.</title>
        <authorList>
            <person name="Andersen S.O."/>
        </authorList>
    </citation>
    <scope>PROTEIN SEQUENCE</scope>
    <scope>MASS SPECTROMETRY</scope>
    <source>
        <tissue evidence="1">Fifth instar larvae cuticle</tissue>
    </source>
</reference>
<comment type="function">
    <text evidence="2">Component of the cuticle of migratory locust which contains more than 100 different structural proteins.</text>
</comment>
<comment type="mass spectrometry" mass="9498.3" method="Plasma desorption" evidence="1"/>
<sequence length="90" mass="9506">ATVPAGTSVYQQPAVQYQQYQPYQTVVQSQPQQVVAGRVVPAVYPATVGSQVYPSGVVPATVYNSGIVRNVYPAGVVPAVAGAYQYFPTD</sequence>
<organism>
    <name type="scientific">Locusta migratoria</name>
    <name type="common">Migratory locust</name>
    <dbReference type="NCBI Taxonomy" id="7004"/>
    <lineage>
        <taxon>Eukaryota</taxon>
        <taxon>Metazoa</taxon>
        <taxon>Ecdysozoa</taxon>
        <taxon>Arthropoda</taxon>
        <taxon>Hexapoda</taxon>
        <taxon>Insecta</taxon>
        <taxon>Pterygota</taxon>
        <taxon>Neoptera</taxon>
        <taxon>Polyneoptera</taxon>
        <taxon>Orthoptera</taxon>
        <taxon>Caelifera</taxon>
        <taxon>Acrididea</taxon>
        <taxon>Acridomorpha</taxon>
        <taxon>Acridoidea</taxon>
        <taxon>Acrididae</taxon>
        <taxon>Oedipodinae</taxon>
        <taxon>Locusta</taxon>
    </lineage>
</organism>
<name>CU095_LOCMI</name>
<accession>P82171</accession>
<dbReference type="GO" id="GO:0042302">
    <property type="term" value="F:structural constituent of cuticle"/>
    <property type="evidence" value="ECO:0007669"/>
    <property type="project" value="UniProtKB-KW"/>
</dbReference>
<evidence type="ECO:0000269" key="1">
    <source>
    </source>
</evidence>
<evidence type="ECO:0000305" key="2"/>